<evidence type="ECO:0000255" key="1">
    <source>
        <dbReference type="HAMAP-Rule" id="MF_01351"/>
    </source>
</evidence>
<dbReference type="EC" id="7.1.1.-" evidence="1"/>
<dbReference type="EMBL" id="CP000301">
    <property type="protein sequence ID" value="ABD89590.1"/>
    <property type="molecule type" value="Genomic_DNA"/>
</dbReference>
<dbReference type="SMR" id="Q20Z46"/>
<dbReference type="STRING" id="316056.RPC_4064"/>
<dbReference type="KEGG" id="rpc:RPC_4064"/>
<dbReference type="eggNOG" id="COG1143">
    <property type="taxonomic scope" value="Bacteria"/>
</dbReference>
<dbReference type="HOGENOM" id="CLU_067218_4_3_5"/>
<dbReference type="OrthoDB" id="9808559at2"/>
<dbReference type="GO" id="GO:0005886">
    <property type="term" value="C:plasma membrane"/>
    <property type="evidence" value="ECO:0007669"/>
    <property type="project" value="UniProtKB-SubCell"/>
</dbReference>
<dbReference type="GO" id="GO:0051539">
    <property type="term" value="F:4 iron, 4 sulfur cluster binding"/>
    <property type="evidence" value="ECO:0007669"/>
    <property type="project" value="UniProtKB-KW"/>
</dbReference>
<dbReference type="GO" id="GO:0005506">
    <property type="term" value="F:iron ion binding"/>
    <property type="evidence" value="ECO:0007669"/>
    <property type="project" value="UniProtKB-UniRule"/>
</dbReference>
<dbReference type="GO" id="GO:0050136">
    <property type="term" value="F:NADH:ubiquinone reductase (non-electrogenic) activity"/>
    <property type="evidence" value="ECO:0007669"/>
    <property type="project" value="UniProtKB-UniRule"/>
</dbReference>
<dbReference type="GO" id="GO:0048038">
    <property type="term" value="F:quinone binding"/>
    <property type="evidence" value="ECO:0007669"/>
    <property type="project" value="UniProtKB-KW"/>
</dbReference>
<dbReference type="GO" id="GO:0009060">
    <property type="term" value="P:aerobic respiration"/>
    <property type="evidence" value="ECO:0007669"/>
    <property type="project" value="TreeGrafter"/>
</dbReference>
<dbReference type="FunFam" id="3.30.70.3270:FF:000002">
    <property type="entry name" value="NADH-quinone oxidoreductase subunit I"/>
    <property type="match status" value="1"/>
</dbReference>
<dbReference type="Gene3D" id="3.30.70.3270">
    <property type="match status" value="1"/>
</dbReference>
<dbReference type="HAMAP" id="MF_01351">
    <property type="entry name" value="NDH1_NuoI"/>
    <property type="match status" value="1"/>
</dbReference>
<dbReference type="InterPro" id="IPR017896">
    <property type="entry name" value="4Fe4S_Fe-S-bd"/>
</dbReference>
<dbReference type="InterPro" id="IPR017900">
    <property type="entry name" value="4Fe4S_Fe_S_CS"/>
</dbReference>
<dbReference type="InterPro" id="IPR010226">
    <property type="entry name" value="NADH_quinone_OxRdtase_chainI"/>
</dbReference>
<dbReference type="NCBIfam" id="TIGR01971">
    <property type="entry name" value="NuoI"/>
    <property type="match status" value="1"/>
</dbReference>
<dbReference type="NCBIfam" id="NF004536">
    <property type="entry name" value="PRK05888.1-1"/>
    <property type="match status" value="1"/>
</dbReference>
<dbReference type="PANTHER" id="PTHR10849:SF20">
    <property type="entry name" value="NADH DEHYDROGENASE [UBIQUINONE] IRON-SULFUR PROTEIN 8, MITOCHONDRIAL"/>
    <property type="match status" value="1"/>
</dbReference>
<dbReference type="PANTHER" id="PTHR10849">
    <property type="entry name" value="NADH DEHYDROGENASE UBIQUINONE IRON-SULFUR PROTEIN 8, MITOCHONDRIAL"/>
    <property type="match status" value="1"/>
</dbReference>
<dbReference type="Pfam" id="PF12838">
    <property type="entry name" value="Fer4_7"/>
    <property type="match status" value="1"/>
</dbReference>
<dbReference type="SUPFAM" id="SSF54862">
    <property type="entry name" value="4Fe-4S ferredoxins"/>
    <property type="match status" value="1"/>
</dbReference>
<dbReference type="PROSITE" id="PS00198">
    <property type="entry name" value="4FE4S_FER_1"/>
    <property type="match status" value="2"/>
</dbReference>
<dbReference type="PROSITE" id="PS51379">
    <property type="entry name" value="4FE4S_FER_2"/>
    <property type="match status" value="2"/>
</dbReference>
<proteinExistence type="inferred from homology"/>
<reference key="1">
    <citation type="submission" date="2006-03" db="EMBL/GenBank/DDBJ databases">
        <title>Complete sequence of Rhodopseudomonas palustris BisB18.</title>
        <authorList>
            <consortium name="US DOE Joint Genome Institute"/>
            <person name="Copeland A."/>
            <person name="Lucas S."/>
            <person name="Lapidus A."/>
            <person name="Barry K."/>
            <person name="Detter J.C."/>
            <person name="Glavina del Rio T."/>
            <person name="Hammon N."/>
            <person name="Israni S."/>
            <person name="Dalin E."/>
            <person name="Tice H."/>
            <person name="Pitluck S."/>
            <person name="Chain P."/>
            <person name="Malfatti S."/>
            <person name="Shin M."/>
            <person name="Vergez L."/>
            <person name="Schmutz J."/>
            <person name="Larimer F."/>
            <person name="Land M."/>
            <person name="Hauser L."/>
            <person name="Pelletier D.A."/>
            <person name="Kyrpides N."/>
            <person name="Anderson I."/>
            <person name="Oda Y."/>
            <person name="Harwood C.S."/>
            <person name="Richardson P."/>
        </authorList>
    </citation>
    <scope>NUCLEOTIDE SEQUENCE [LARGE SCALE GENOMIC DNA]</scope>
    <source>
        <strain>BisB18</strain>
    </source>
</reference>
<gene>
    <name evidence="1" type="primary">nuoI2</name>
    <name type="ordered locus">RPC_4064</name>
</gene>
<feature type="chain" id="PRO_0000250939" description="NADH-quinone oxidoreductase subunit I 2">
    <location>
        <begin position="1"/>
        <end position="171"/>
    </location>
</feature>
<feature type="domain" description="4Fe-4S ferredoxin-type 1" evidence="1">
    <location>
        <begin position="39"/>
        <end position="71"/>
    </location>
</feature>
<feature type="domain" description="4Fe-4S ferredoxin-type 2" evidence="1">
    <location>
        <begin position="81"/>
        <end position="110"/>
    </location>
</feature>
<feature type="binding site" evidence="1">
    <location>
        <position position="51"/>
    </location>
    <ligand>
        <name>[4Fe-4S] cluster</name>
        <dbReference type="ChEBI" id="CHEBI:49883"/>
        <label>1</label>
    </ligand>
</feature>
<feature type="binding site" evidence="1">
    <location>
        <position position="54"/>
    </location>
    <ligand>
        <name>[4Fe-4S] cluster</name>
        <dbReference type="ChEBI" id="CHEBI:49883"/>
        <label>1</label>
    </ligand>
</feature>
<feature type="binding site" evidence="1">
    <location>
        <position position="57"/>
    </location>
    <ligand>
        <name>[4Fe-4S] cluster</name>
        <dbReference type="ChEBI" id="CHEBI:49883"/>
        <label>1</label>
    </ligand>
</feature>
<feature type="binding site" evidence="1">
    <location>
        <position position="61"/>
    </location>
    <ligand>
        <name>[4Fe-4S] cluster</name>
        <dbReference type="ChEBI" id="CHEBI:49883"/>
        <label>2</label>
    </ligand>
</feature>
<feature type="binding site" evidence="1">
    <location>
        <position position="90"/>
    </location>
    <ligand>
        <name>[4Fe-4S] cluster</name>
        <dbReference type="ChEBI" id="CHEBI:49883"/>
        <label>2</label>
    </ligand>
</feature>
<feature type="binding site" evidence="1">
    <location>
        <position position="93"/>
    </location>
    <ligand>
        <name>[4Fe-4S] cluster</name>
        <dbReference type="ChEBI" id="CHEBI:49883"/>
        <label>2</label>
    </ligand>
</feature>
<feature type="binding site" evidence="1">
    <location>
        <position position="96"/>
    </location>
    <ligand>
        <name>[4Fe-4S] cluster</name>
        <dbReference type="ChEBI" id="CHEBI:49883"/>
        <label>2</label>
    </ligand>
</feature>
<feature type="binding site" evidence="1">
    <location>
        <position position="100"/>
    </location>
    <ligand>
        <name>[4Fe-4S] cluster</name>
        <dbReference type="ChEBI" id="CHEBI:49883"/>
        <label>1</label>
    </ligand>
</feature>
<comment type="function">
    <text evidence="1">NDH-1 shuttles electrons from NADH, via FMN and iron-sulfur (Fe-S) centers, to quinones in the respiratory chain. The immediate electron acceptor for the enzyme in this species is believed to be ubiquinone. Couples the redox reaction to proton translocation (for every two electrons transferred, four hydrogen ions are translocated across the cytoplasmic membrane), and thus conserves the redox energy in a proton gradient.</text>
</comment>
<comment type="catalytic activity">
    <reaction evidence="1">
        <text>a quinone + NADH + 5 H(+)(in) = a quinol + NAD(+) + 4 H(+)(out)</text>
        <dbReference type="Rhea" id="RHEA:57888"/>
        <dbReference type="ChEBI" id="CHEBI:15378"/>
        <dbReference type="ChEBI" id="CHEBI:24646"/>
        <dbReference type="ChEBI" id="CHEBI:57540"/>
        <dbReference type="ChEBI" id="CHEBI:57945"/>
        <dbReference type="ChEBI" id="CHEBI:132124"/>
    </reaction>
</comment>
<comment type="cofactor">
    <cofactor evidence="1">
        <name>[4Fe-4S] cluster</name>
        <dbReference type="ChEBI" id="CHEBI:49883"/>
    </cofactor>
    <text evidence="1">Binds 2 [4Fe-4S] clusters per subunit.</text>
</comment>
<comment type="subunit">
    <text evidence="1">NDH-1 is composed of 14 different subunits. Subunits NuoA, H, J, K, L, M, N constitute the membrane sector of the complex.</text>
</comment>
<comment type="subcellular location">
    <subcellularLocation>
        <location evidence="1">Cell inner membrane</location>
        <topology evidence="1">Peripheral membrane protein</topology>
    </subcellularLocation>
</comment>
<comment type="similarity">
    <text evidence="1">Belongs to the complex I 23 kDa subunit family.</text>
</comment>
<protein>
    <recommendedName>
        <fullName evidence="1">NADH-quinone oxidoreductase subunit I 2</fullName>
        <ecNumber evidence="1">7.1.1.-</ecNumber>
    </recommendedName>
    <alternativeName>
        <fullName evidence="1">NADH dehydrogenase I subunit I 2</fullName>
    </alternativeName>
    <alternativeName>
        <fullName evidence="1">NDH-1 subunit I 2</fullName>
    </alternativeName>
</protein>
<organism>
    <name type="scientific">Rhodopseudomonas palustris (strain BisB18)</name>
    <dbReference type="NCBI Taxonomy" id="316056"/>
    <lineage>
        <taxon>Bacteria</taxon>
        <taxon>Pseudomonadati</taxon>
        <taxon>Pseudomonadota</taxon>
        <taxon>Alphaproteobacteria</taxon>
        <taxon>Hyphomicrobiales</taxon>
        <taxon>Nitrobacteraceae</taxon>
        <taxon>Rhodopseudomonas</taxon>
    </lineage>
</organism>
<name>NUOI2_RHOPB</name>
<keyword id="KW-0004">4Fe-4S</keyword>
<keyword id="KW-0997">Cell inner membrane</keyword>
<keyword id="KW-1003">Cell membrane</keyword>
<keyword id="KW-0408">Iron</keyword>
<keyword id="KW-0411">Iron-sulfur</keyword>
<keyword id="KW-0472">Membrane</keyword>
<keyword id="KW-0479">Metal-binding</keyword>
<keyword id="KW-0520">NAD</keyword>
<keyword id="KW-0874">Quinone</keyword>
<keyword id="KW-0677">Repeat</keyword>
<keyword id="KW-1278">Translocase</keyword>
<keyword id="KW-0830">Ubiquinone</keyword>
<accession>Q20Z46</accession>
<sequence length="171" mass="19063">MIGWLEALLRVGRKLAAKTVTVQYPEVKPQLPPRSRGRIVLTRDPDGQERCVACNLCAVACPVGCIDLSKAVAEDGRWYPEHFRINFARCIFCGYCEEACPTAAIQLTPDFELSEWRRDALVYDKKDLLIAGEGKVRGYRYWSVAGKAITGKDKGDAEHEAPPVDLKGLRP</sequence>